<organism>
    <name type="scientific">Arabidopsis thaliana</name>
    <name type="common">Mouse-ear cress</name>
    <dbReference type="NCBI Taxonomy" id="3702"/>
    <lineage>
        <taxon>Eukaryota</taxon>
        <taxon>Viridiplantae</taxon>
        <taxon>Streptophyta</taxon>
        <taxon>Embryophyta</taxon>
        <taxon>Tracheophyta</taxon>
        <taxon>Spermatophyta</taxon>
        <taxon>Magnoliopsida</taxon>
        <taxon>eudicotyledons</taxon>
        <taxon>Gunneridae</taxon>
        <taxon>Pentapetalae</taxon>
        <taxon>rosids</taxon>
        <taxon>malvids</taxon>
        <taxon>Brassicales</taxon>
        <taxon>Brassicaceae</taxon>
        <taxon>Camelineae</taxon>
        <taxon>Arabidopsis</taxon>
    </lineage>
</organism>
<keyword id="KW-1185">Reference proteome</keyword>
<protein>
    <recommendedName>
        <fullName>Putative F-box protein At1g50880</fullName>
    </recommendedName>
</protein>
<dbReference type="EMBL" id="AC079284">
    <property type="protein sequence ID" value="AAG50950.1"/>
    <property type="molecule type" value="Genomic_DNA"/>
</dbReference>
<dbReference type="EMBL" id="CP002684">
    <property type="protein sequence ID" value="AEE32597.1"/>
    <property type="molecule type" value="Genomic_DNA"/>
</dbReference>
<dbReference type="PIR" id="G96545">
    <property type="entry name" value="G96545"/>
</dbReference>
<dbReference type="RefSeq" id="NP_175501.1">
    <property type="nucleotide sequence ID" value="NM_103968.1"/>
</dbReference>
<dbReference type="PaxDb" id="3702-AT1G50880.1"/>
<dbReference type="EnsemblPlants" id="AT1G50880.1">
    <property type="protein sequence ID" value="AT1G50880.1"/>
    <property type="gene ID" value="AT1G50880"/>
</dbReference>
<dbReference type="GeneID" id="841510"/>
<dbReference type="Gramene" id="AT1G50880.1">
    <property type="protein sequence ID" value="AT1G50880.1"/>
    <property type="gene ID" value="AT1G50880"/>
</dbReference>
<dbReference type="KEGG" id="ath:AT1G50880"/>
<dbReference type="Araport" id="AT1G50880"/>
<dbReference type="TAIR" id="AT1G50880"/>
<dbReference type="HOGENOM" id="CLU_027176_8_0_1"/>
<dbReference type="InParanoid" id="Q9C6J2"/>
<dbReference type="OMA" id="GICPRLD"/>
<dbReference type="PhylomeDB" id="Q9C6J2"/>
<dbReference type="PRO" id="PR:Q9C6J2"/>
<dbReference type="Proteomes" id="UP000006548">
    <property type="component" value="Chromosome 1"/>
</dbReference>
<dbReference type="ExpressionAtlas" id="Q9C6J2">
    <property type="expression patterns" value="baseline and differential"/>
</dbReference>
<dbReference type="CDD" id="cd22157">
    <property type="entry name" value="F-box_AtFBW1-like"/>
    <property type="match status" value="1"/>
</dbReference>
<dbReference type="Gene3D" id="1.20.1280.50">
    <property type="match status" value="1"/>
</dbReference>
<dbReference type="InterPro" id="IPR013187">
    <property type="entry name" value="F-box-assoc_dom_typ3"/>
</dbReference>
<dbReference type="InterPro" id="IPR036047">
    <property type="entry name" value="F-box-like_dom_sf"/>
</dbReference>
<dbReference type="InterPro" id="IPR001810">
    <property type="entry name" value="F-box_dom"/>
</dbReference>
<dbReference type="PANTHER" id="PTHR31111">
    <property type="entry name" value="BNAA05G37150D PROTEIN-RELATED"/>
    <property type="match status" value="1"/>
</dbReference>
<dbReference type="PANTHER" id="PTHR31111:SF138">
    <property type="entry name" value="F-BOX ASSOCIATED DOMAIN-CONTAINING PROTEIN"/>
    <property type="match status" value="1"/>
</dbReference>
<dbReference type="Pfam" id="PF00646">
    <property type="entry name" value="F-box"/>
    <property type="match status" value="1"/>
</dbReference>
<dbReference type="Pfam" id="PF08268">
    <property type="entry name" value="FBA_3"/>
    <property type="match status" value="2"/>
</dbReference>
<dbReference type="SMART" id="SM00256">
    <property type="entry name" value="FBOX"/>
    <property type="match status" value="1"/>
</dbReference>
<dbReference type="SUPFAM" id="SSF81383">
    <property type="entry name" value="F-box domain"/>
    <property type="match status" value="1"/>
</dbReference>
<dbReference type="PROSITE" id="PS50181">
    <property type="entry name" value="FBOX"/>
    <property type="match status" value="1"/>
</dbReference>
<accession>Q9C6J2</accession>
<evidence type="ECO:0000255" key="1">
    <source>
        <dbReference type="PROSITE-ProRule" id="PRU00080"/>
    </source>
</evidence>
<feature type="chain" id="PRO_0000283327" description="Putative F-box protein At1g50880">
    <location>
        <begin position="1"/>
        <end position="279"/>
    </location>
</feature>
<feature type="domain" description="F-box" evidence="1">
    <location>
        <begin position="19"/>
        <end position="69"/>
    </location>
</feature>
<gene>
    <name type="ordered locus">At1g50880</name>
    <name type="ORF">F8A12.10</name>
</gene>
<sequence length="279" mass="31871">MEQQEKKKRKIQRSISTQSSSMSSIPLDVTSKILAKLPAKSVLRARCVSKQWSSISTDPYFISNMFPKQSSSSLLIFFKPKRKLFVISIHQNPNEPQHVGICPRLDLFPNSKKTHYLEPYLEKILNLAQTQKQLEGNTIGDNDGQCINGVLYYRASLDQSNVDIIMSFDVSTMYNKDITLWVLEDAKWLCKHFTRASYNDQPLQALSGINGITDDGEFIYVAYVLDSFYILYYDPEKKSYRRVDLQGVGDADFMLRNGLGNMDGIRIHTCLNIESLLSL</sequence>
<reference key="1">
    <citation type="journal article" date="2000" name="Nature">
        <title>Sequence and analysis of chromosome 1 of the plant Arabidopsis thaliana.</title>
        <authorList>
            <person name="Theologis A."/>
            <person name="Ecker J.R."/>
            <person name="Palm C.J."/>
            <person name="Federspiel N.A."/>
            <person name="Kaul S."/>
            <person name="White O."/>
            <person name="Alonso J."/>
            <person name="Altafi H."/>
            <person name="Araujo R."/>
            <person name="Bowman C.L."/>
            <person name="Brooks S.Y."/>
            <person name="Buehler E."/>
            <person name="Chan A."/>
            <person name="Chao Q."/>
            <person name="Chen H."/>
            <person name="Cheuk R.F."/>
            <person name="Chin C.W."/>
            <person name="Chung M.K."/>
            <person name="Conn L."/>
            <person name="Conway A.B."/>
            <person name="Conway A.R."/>
            <person name="Creasy T.H."/>
            <person name="Dewar K."/>
            <person name="Dunn P."/>
            <person name="Etgu P."/>
            <person name="Feldblyum T.V."/>
            <person name="Feng J.-D."/>
            <person name="Fong B."/>
            <person name="Fujii C.Y."/>
            <person name="Gill J.E."/>
            <person name="Goldsmith A.D."/>
            <person name="Haas B."/>
            <person name="Hansen N.F."/>
            <person name="Hughes B."/>
            <person name="Huizar L."/>
            <person name="Hunter J.L."/>
            <person name="Jenkins J."/>
            <person name="Johnson-Hopson C."/>
            <person name="Khan S."/>
            <person name="Khaykin E."/>
            <person name="Kim C.J."/>
            <person name="Koo H.L."/>
            <person name="Kremenetskaia I."/>
            <person name="Kurtz D.B."/>
            <person name="Kwan A."/>
            <person name="Lam B."/>
            <person name="Langin-Hooper S."/>
            <person name="Lee A."/>
            <person name="Lee J.M."/>
            <person name="Lenz C.A."/>
            <person name="Li J.H."/>
            <person name="Li Y.-P."/>
            <person name="Lin X."/>
            <person name="Liu S.X."/>
            <person name="Liu Z.A."/>
            <person name="Luros J.S."/>
            <person name="Maiti R."/>
            <person name="Marziali A."/>
            <person name="Militscher J."/>
            <person name="Miranda M."/>
            <person name="Nguyen M."/>
            <person name="Nierman W.C."/>
            <person name="Osborne B.I."/>
            <person name="Pai G."/>
            <person name="Peterson J."/>
            <person name="Pham P.K."/>
            <person name="Rizzo M."/>
            <person name="Rooney T."/>
            <person name="Rowley D."/>
            <person name="Sakano H."/>
            <person name="Salzberg S.L."/>
            <person name="Schwartz J.R."/>
            <person name="Shinn P."/>
            <person name="Southwick A.M."/>
            <person name="Sun H."/>
            <person name="Tallon L.J."/>
            <person name="Tambunga G."/>
            <person name="Toriumi M.J."/>
            <person name="Town C.D."/>
            <person name="Utterback T."/>
            <person name="Van Aken S."/>
            <person name="Vaysberg M."/>
            <person name="Vysotskaia V.S."/>
            <person name="Walker M."/>
            <person name="Wu D."/>
            <person name="Yu G."/>
            <person name="Fraser C.M."/>
            <person name="Venter J.C."/>
            <person name="Davis R.W."/>
        </authorList>
    </citation>
    <scope>NUCLEOTIDE SEQUENCE [LARGE SCALE GENOMIC DNA]</scope>
    <source>
        <strain>cv. Columbia</strain>
    </source>
</reference>
<reference key="2">
    <citation type="journal article" date="2017" name="Plant J.">
        <title>Araport11: a complete reannotation of the Arabidopsis thaliana reference genome.</title>
        <authorList>
            <person name="Cheng C.Y."/>
            <person name="Krishnakumar V."/>
            <person name="Chan A.P."/>
            <person name="Thibaud-Nissen F."/>
            <person name="Schobel S."/>
            <person name="Town C.D."/>
        </authorList>
    </citation>
    <scope>GENOME REANNOTATION</scope>
    <source>
        <strain>cv. Columbia</strain>
    </source>
</reference>
<name>FB53_ARATH</name>
<proteinExistence type="predicted"/>